<evidence type="ECO:0000255" key="1">
    <source>
        <dbReference type="HAMAP-Rule" id="MF_01217"/>
    </source>
</evidence>
<evidence type="ECO:0000255" key="2">
    <source>
        <dbReference type="PROSITE-ProRule" id="PRU00258"/>
    </source>
</evidence>
<evidence type="ECO:0000269" key="3">
    <source>
    </source>
</evidence>
<name>ACP_COMTE</name>
<feature type="initiator methionine" description="Removed" evidence="3">
    <location>
        <position position="1"/>
    </location>
</feature>
<feature type="chain" id="PRO_0000180132" description="Acyl carrier protein">
    <location>
        <begin position="2"/>
        <end position="78"/>
    </location>
</feature>
<feature type="domain" description="Carrier" evidence="2">
    <location>
        <begin position="2"/>
        <end position="77"/>
    </location>
</feature>
<feature type="modified residue" description="O-(pantetheine 4'-phosphoryl)serine" evidence="2 3">
    <location>
        <position position="37"/>
    </location>
</feature>
<organism>
    <name type="scientific">Comamonas testosteroni</name>
    <name type="common">Pseudomonas testosteroni</name>
    <dbReference type="NCBI Taxonomy" id="285"/>
    <lineage>
        <taxon>Bacteria</taxon>
        <taxon>Pseudomonadati</taxon>
        <taxon>Pseudomonadota</taxon>
        <taxon>Betaproteobacteria</taxon>
        <taxon>Burkholderiales</taxon>
        <taxon>Comamonadaceae</taxon>
        <taxon>Comamonas</taxon>
    </lineage>
</organism>
<sequence length="78" mass="8537">MSDIEARVKKIIAEQLGVEESQVTNEKAFVADLGADSLDTVELVMALEDEFGIEIPDEDAEKITTVQNAIDYANTHQA</sequence>
<comment type="function">
    <text>Carrier of the growing fatty acid chain in fatty acid biosynthesis.</text>
</comment>
<comment type="pathway">
    <text evidence="1">Lipid metabolism; fatty acid biosynthesis.</text>
</comment>
<comment type="subcellular location">
    <subcellularLocation>
        <location evidence="1">Cytoplasm</location>
    </subcellularLocation>
</comment>
<comment type="PTM">
    <text>4'-phosphopantetheine is transferred from CoA to a specific serine of apo-ACP by AcpS. This modification is essential for activity because fatty acids are bound in thioester linkage to the sulfhydryl of the prosthetic group.</text>
</comment>
<comment type="similarity">
    <text evidence="1">Belongs to the acyl carrier protein (ACP) family.</text>
</comment>
<gene>
    <name evidence="1" type="primary">acpP</name>
</gene>
<reference key="1">
    <citation type="journal article" date="1997" name="J. Bacteriol.">
        <title>Domains of Escherichia coli acyl carrier protein important for membrane-derived-oligosaccharide biosynthesis.</title>
        <authorList>
            <person name="Tang L."/>
            <person name="Weissborn A.C."/>
            <person name="Kennedy E.P."/>
        </authorList>
    </citation>
    <scope>PROTEIN SEQUENCE OF 2-78</scope>
    <scope>PHOSPHOPANTETHEINYLATION AT SER-37</scope>
    <source>
        <strain>ATCC 11996 / DSM 50244 / CCUG 1426 / IAM 12419 / JCM 5832 / NCIMB 8955 / NBRC 14951 / NCTC 10698 / NRRL B-2611</strain>
    </source>
</reference>
<accession>P80918</accession>
<dbReference type="SMR" id="P80918"/>
<dbReference type="UniPathway" id="UPA00094"/>
<dbReference type="GO" id="GO:0005829">
    <property type="term" value="C:cytosol"/>
    <property type="evidence" value="ECO:0007669"/>
    <property type="project" value="TreeGrafter"/>
</dbReference>
<dbReference type="GO" id="GO:0016020">
    <property type="term" value="C:membrane"/>
    <property type="evidence" value="ECO:0007669"/>
    <property type="project" value="GOC"/>
</dbReference>
<dbReference type="GO" id="GO:0000035">
    <property type="term" value="F:acyl binding"/>
    <property type="evidence" value="ECO:0007669"/>
    <property type="project" value="TreeGrafter"/>
</dbReference>
<dbReference type="GO" id="GO:0000036">
    <property type="term" value="F:acyl carrier activity"/>
    <property type="evidence" value="ECO:0007669"/>
    <property type="project" value="UniProtKB-UniRule"/>
</dbReference>
<dbReference type="GO" id="GO:0031177">
    <property type="term" value="F:phosphopantetheine binding"/>
    <property type="evidence" value="ECO:0007669"/>
    <property type="project" value="InterPro"/>
</dbReference>
<dbReference type="GO" id="GO:0009245">
    <property type="term" value="P:lipid A biosynthetic process"/>
    <property type="evidence" value="ECO:0007669"/>
    <property type="project" value="TreeGrafter"/>
</dbReference>
<dbReference type="FunFam" id="1.10.1200.10:FF:000001">
    <property type="entry name" value="Acyl carrier protein"/>
    <property type="match status" value="1"/>
</dbReference>
<dbReference type="Gene3D" id="1.10.1200.10">
    <property type="entry name" value="ACP-like"/>
    <property type="match status" value="1"/>
</dbReference>
<dbReference type="HAMAP" id="MF_01217">
    <property type="entry name" value="Acyl_carrier"/>
    <property type="match status" value="1"/>
</dbReference>
<dbReference type="InterPro" id="IPR003231">
    <property type="entry name" value="ACP"/>
</dbReference>
<dbReference type="InterPro" id="IPR036736">
    <property type="entry name" value="ACP-like_sf"/>
</dbReference>
<dbReference type="InterPro" id="IPR020806">
    <property type="entry name" value="PKS_PP-bd"/>
</dbReference>
<dbReference type="InterPro" id="IPR009081">
    <property type="entry name" value="PP-bd_ACP"/>
</dbReference>
<dbReference type="InterPro" id="IPR006162">
    <property type="entry name" value="Ppantetheine_attach_site"/>
</dbReference>
<dbReference type="NCBIfam" id="TIGR00517">
    <property type="entry name" value="acyl_carrier"/>
    <property type="match status" value="1"/>
</dbReference>
<dbReference type="NCBIfam" id="NF002148">
    <property type="entry name" value="PRK00982.1-2"/>
    <property type="match status" value="1"/>
</dbReference>
<dbReference type="NCBIfam" id="NF002149">
    <property type="entry name" value="PRK00982.1-3"/>
    <property type="match status" value="1"/>
</dbReference>
<dbReference type="NCBIfam" id="NF002150">
    <property type="entry name" value="PRK00982.1-4"/>
    <property type="match status" value="1"/>
</dbReference>
<dbReference type="NCBIfam" id="NF002151">
    <property type="entry name" value="PRK00982.1-5"/>
    <property type="match status" value="1"/>
</dbReference>
<dbReference type="PANTHER" id="PTHR20863">
    <property type="entry name" value="ACYL CARRIER PROTEIN"/>
    <property type="match status" value="1"/>
</dbReference>
<dbReference type="PANTHER" id="PTHR20863:SF76">
    <property type="entry name" value="CARRIER DOMAIN-CONTAINING PROTEIN"/>
    <property type="match status" value="1"/>
</dbReference>
<dbReference type="Pfam" id="PF00550">
    <property type="entry name" value="PP-binding"/>
    <property type="match status" value="1"/>
</dbReference>
<dbReference type="SMART" id="SM00823">
    <property type="entry name" value="PKS_PP"/>
    <property type="match status" value="1"/>
</dbReference>
<dbReference type="SUPFAM" id="SSF47336">
    <property type="entry name" value="ACP-like"/>
    <property type="match status" value="1"/>
</dbReference>
<dbReference type="PROSITE" id="PS50075">
    <property type="entry name" value="CARRIER"/>
    <property type="match status" value="1"/>
</dbReference>
<dbReference type="PROSITE" id="PS00012">
    <property type="entry name" value="PHOSPHOPANTETHEINE"/>
    <property type="match status" value="1"/>
</dbReference>
<keyword id="KW-0963">Cytoplasm</keyword>
<keyword id="KW-0903">Direct protein sequencing</keyword>
<keyword id="KW-0275">Fatty acid biosynthesis</keyword>
<keyword id="KW-0276">Fatty acid metabolism</keyword>
<keyword id="KW-0444">Lipid biosynthesis</keyword>
<keyword id="KW-0443">Lipid metabolism</keyword>
<keyword id="KW-0596">Phosphopantetheine</keyword>
<keyword id="KW-0597">Phosphoprotein</keyword>
<protein>
    <recommendedName>
        <fullName evidence="1">Acyl carrier protein</fullName>
        <shortName evidence="1">ACP</shortName>
    </recommendedName>
</protein>
<proteinExistence type="evidence at protein level"/>